<accession>C1DA28</accession>
<reference key="1">
    <citation type="journal article" date="2009" name="PLoS Genet.">
        <title>The complete genome and proteome of Laribacter hongkongensis reveal potential mechanisms for adaptations to different temperatures and habitats.</title>
        <authorList>
            <person name="Woo P.C.Y."/>
            <person name="Lau S.K.P."/>
            <person name="Tse H."/>
            <person name="Teng J.L.L."/>
            <person name="Curreem S.O."/>
            <person name="Tsang A.K.L."/>
            <person name="Fan R.Y.Y."/>
            <person name="Wong G.K.M."/>
            <person name="Huang Y."/>
            <person name="Loman N.J."/>
            <person name="Snyder L.A.S."/>
            <person name="Cai J.J."/>
            <person name="Huang J.-D."/>
            <person name="Mak W."/>
            <person name="Pallen M.J."/>
            <person name="Lok S."/>
            <person name="Yuen K.-Y."/>
        </authorList>
    </citation>
    <scope>NUCLEOTIDE SEQUENCE [LARGE SCALE GENOMIC DNA]</scope>
    <source>
        <strain>HLHK9</strain>
    </source>
</reference>
<evidence type="ECO:0000255" key="1">
    <source>
        <dbReference type="HAMAP-Rule" id="MF_00658"/>
    </source>
</evidence>
<dbReference type="EC" id="2.1.1.177" evidence="1"/>
<dbReference type="EMBL" id="CP001154">
    <property type="protein sequence ID" value="ACO73141.1"/>
    <property type="molecule type" value="Genomic_DNA"/>
</dbReference>
<dbReference type="RefSeq" id="WP_012695636.1">
    <property type="nucleotide sequence ID" value="NC_012559.1"/>
</dbReference>
<dbReference type="SMR" id="C1DA28"/>
<dbReference type="STRING" id="557598.LHK_00145"/>
<dbReference type="GeneID" id="75109582"/>
<dbReference type="KEGG" id="lhk:LHK_00145"/>
<dbReference type="eggNOG" id="COG1576">
    <property type="taxonomic scope" value="Bacteria"/>
</dbReference>
<dbReference type="HOGENOM" id="CLU_100552_1_0_4"/>
<dbReference type="Proteomes" id="UP000002010">
    <property type="component" value="Chromosome"/>
</dbReference>
<dbReference type="GO" id="GO:0005737">
    <property type="term" value="C:cytoplasm"/>
    <property type="evidence" value="ECO:0007669"/>
    <property type="project" value="UniProtKB-SubCell"/>
</dbReference>
<dbReference type="GO" id="GO:0070038">
    <property type="term" value="F:rRNA (pseudouridine-N3-)-methyltransferase activity"/>
    <property type="evidence" value="ECO:0007669"/>
    <property type="project" value="UniProtKB-UniRule"/>
</dbReference>
<dbReference type="CDD" id="cd18081">
    <property type="entry name" value="RlmH-like"/>
    <property type="match status" value="1"/>
</dbReference>
<dbReference type="Gene3D" id="3.40.1280.10">
    <property type="match status" value="1"/>
</dbReference>
<dbReference type="HAMAP" id="MF_00658">
    <property type="entry name" value="23SrRNA_methyltr_H"/>
    <property type="match status" value="1"/>
</dbReference>
<dbReference type="InterPro" id="IPR029028">
    <property type="entry name" value="Alpha/beta_knot_MTases"/>
</dbReference>
<dbReference type="InterPro" id="IPR003742">
    <property type="entry name" value="RlmH-like"/>
</dbReference>
<dbReference type="InterPro" id="IPR029026">
    <property type="entry name" value="tRNA_m1G_MTases_N"/>
</dbReference>
<dbReference type="NCBIfam" id="NF000986">
    <property type="entry name" value="PRK00103.1-4"/>
    <property type="match status" value="1"/>
</dbReference>
<dbReference type="PANTHER" id="PTHR33603">
    <property type="entry name" value="METHYLTRANSFERASE"/>
    <property type="match status" value="1"/>
</dbReference>
<dbReference type="PANTHER" id="PTHR33603:SF1">
    <property type="entry name" value="RIBOSOMAL RNA LARGE SUBUNIT METHYLTRANSFERASE H"/>
    <property type="match status" value="1"/>
</dbReference>
<dbReference type="Pfam" id="PF02590">
    <property type="entry name" value="SPOUT_MTase"/>
    <property type="match status" value="1"/>
</dbReference>
<dbReference type="PIRSF" id="PIRSF004505">
    <property type="entry name" value="MT_bac"/>
    <property type="match status" value="1"/>
</dbReference>
<dbReference type="SUPFAM" id="SSF75217">
    <property type="entry name" value="alpha/beta knot"/>
    <property type="match status" value="1"/>
</dbReference>
<feature type="chain" id="PRO_1000212459" description="Ribosomal RNA large subunit methyltransferase H">
    <location>
        <begin position="1"/>
        <end position="156"/>
    </location>
</feature>
<feature type="binding site" evidence="1">
    <location>
        <position position="73"/>
    </location>
    <ligand>
        <name>S-adenosyl-L-methionine</name>
        <dbReference type="ChEBI" id="CHEBI:59789"/>
    </ligand>
</feature>
<feature type="binding site" evidence="1">
    <location>
        <position position="104"/>
    </location>
    <ligand>
        <name>S-adenosyl-L-methionine</name>
        <dbReference type="ChEBI" id="CHEBI:59789"/>
    </ligand>
</feature>
<feature type="binding site" evidence="1">
    <location>
        <begin position="123"/>
        <end position="128"/>
    </location>
    <ligand>
        <name>S-adenosyl-L-methionine</name>
        <dbReference type="ChEBI" id="CHEBI:59789"/>
    </ligand>
</feature>
<sequence>MKITLLAVGTKMPRWVDEAYADYAKRLPREVQLELKEIKPEKRGGGVTAEKGIAAEHARLMAALPPRAKLVVLDERGRNWTTMQLADNLKGWLADGQDIAIVIGGADGTAAELKSRADILLQLSAMTLPHGMVRVLLAEQVYRAVSILNGHPYHRE</sequence>
<proteinExistence type="inferred from homology"/>
<protein>
    <recommendedName>
        <fullName evidence="1">Ribosomal RNA large subunit methyltransferase H</fullName>
        <ecNumber evidence="1">2.1.1.177</ecNumber>
    </recommendedName>
    <alternativeName>
        <fullName evidence="1">23S rRNA (pseudouridine1915-N3)-methyltransferase</fullName>
    </alternativeName>
    <alternativeName>
        <fullName evidence="1">23S rRNA m3Psi1915 methyltransferase</fullName>
    </alternativeName>
    <alternativeName>
        <fullName evidence="1">rRNA (pseudouridine-N3-)-methyltransferase RlmH</fullName>
    </alternativeName>
</protein>
<comment type="function">
    <text evidence="1">Specifically methylates the pseudouridine at position 1915 (m3Psi1915) in 23S rRNA.</text>
</comment>
<comment type="catalytic activity">
    <reaction evidence="1">
        <text>pseudouridine(1915) in 23S rRNA + S-adenosyl-L-methionine = N(3)-methylpseudouridine(1915) in 23S rRNA + S-adenosyl-L-homocysteine + H(+)</text>
        <dbReference type="Rhea" id="RHEA:42752"/>
        <dbReference type="Rhea" id="RHEA-COMP:10221"/>
        <dbReference type="Rhea" id="RHEA-COMP:10222"/>
        <dbReference type="ChEBI" id="CHEBI:15378"/>
        <dbReference type="ChEBI" id="CHEBI:57856"/>
        <dbReference type="ChEBI" id="CHEBI:59789"/>
        <dbReference type="ChEBI" id="CHEBI:65314"/>
        <dbReference type="ChEBI" id="CHEBI:74486"/>
        <dbReference type="EC" id="2.1.1.177"/>
    </reaction>
</comment>
<comment type="subunit">
    <text evidence="1">Homodimer.</text>
</comment>
<comment type="subcellular location">
    <subcellularLocation>
        <location evidence="1">Cytoplasm</location>
    </subcellularLocation>
</comment>
<comment type="similarity">
    <text evidence="1">Belongs to the RNA methyltransferase RlmH family.</text>
</comment>
<keyword id="KW-0963">Cytoplasm</keyword>
<keyword id="KW-0489">Methyltransferase</keyword>
<keyword id="KW-1185">Reference proteome</keyword>
<keyword id="KW-0698">rRNA processing</keyword>
<keyword id="KW-0949">S-adenosyl-L-methionine</keyword>
<keyword id="KW-0808">Transferase</keyword>
<gene>
    <name evidence="1" type="primary">rlmH</name>
    <name type="ordered locus">LHK_00145</name>
</gene>
<name>RLMH_LARHH</name>
<organism>
    <name type="scientific">Laribacter hongkongensis (strain HLHK9)</name>
    <dbReference type="NCBI Taxonomy" id="557598"/>
    <lineage>
        <taxon>Bacteria</taxon>
        <taxon>Pseudomonadati</taxon>
        <taxon>Pseudomonadota</taxon>
        <taxon>Betaproteobacteria</taxon>
        <taxon>Neisseriales</taxon>
        <taxon>Aquaspirillaceae</taxon>
        <taxon>Laribacter</taxon>
    </lineage>
</organism>